<keyword id="KW-0131">Cell cycle</keyword>
<keyword id="KW-0132">Cell division</keyword>
<keyword id="KW-1003">Cell membrane</keyword>
<keyword id="KW-0134">Cell wall</keyword>
<keyword id="KW-0961">Cell wall biogenesis/degradation</keyword>
<keyword id="KW-0963">Cytoplasm</keyword>
<keyword id="KW-0217">Developmental protein</keyword>
<keyword id="KW-0221">Differentiation</keyword>
<keyword id="KW-0325">Glycoprotein</keyword>
<keyword id="KW-0328">Glycosyltransferase</keyword>
<keyword id="KW-0341">Growth regulation</keyword>
<keyword id="KW-0472">Membrane</keyword>
<keyword id="KW-1185">Reference proteome</keyword>
<keyword id="KW-0964">Secreted</keyword>
<keyword id="KW-0732">Signal</keyword>
<keyword id="KW-0808">Transferase</keyword>
<protein>
    <recommendedName>
        <fullName evidence="5">Glycosyltransferase-like At3g57200</fullName>
    </recommendedName>
</protein>
<evidence type="ECO:0000250" key="1">
    <source>
        <dbReference type="UniProtKB" id="Q9C9Z9"/>
    </source>
</evidence>
<evidence type="ECO:0000255" key="2"/>
<evidence type="ECO:0000255" key="3">
    <source>
        <dbReference type="PROSITE-ProRule" id="PRU00498"/>
    </source>
</evidence>
<evidence type="ECO:0000256" key="4">
    <source>
        <dbReference type="SAM" id="MobiDB-lite"/>
    </source>
</evidence>
<evidence type="ECO:0000305" key="5"/>
<evidence type="ECO:0000312" key="6">
    <source>
        <dbReference type="Araport" id="AT3G57200"/>
    </source>
</evidence>
<evidence type="ECO:0000312" key="7">
    <source>
        <dbReference type="EMBL" id="AAU44493.1"/>
    </source>
</evidence>
<evidence type="ECO:0000312" key="8">
    <source>
        <dbReference type="EMBL" id="CAB68126.1"/>
    </source>
</evidence>
<dbReference type="EMBL" id="AL137080">
    <property type="protein sequence ID" value="CAB68126.1"/>
    <property type="status" value="ALT_SEQ"/>
    <property type="molecule type" value="Genomic_DNA"/>
</dbReference>
<dbReference type="EMBL" id="CP002686">
    <property type="protein sequence ID" value="AEE79626.1"/>
    <property type="molecule type" value="Genomic_DNA"/>
</dbReference>
<dbReference type="EMBL" id="AY735623">
    <property type="protein sequence ID" value="AAU44493.1"/>
    <property type="molecule type" value="mRNA"/>
</dbReference>
<dbReference type="EMBL" id="AY954853">
    <property type="protein sequence ID" value="AAX55179.1"/>
    <property type="molecule type" value="mRNA"/>
</dbReference>
<dbReference type="PIR" id="T45798">
    <property type="entry name" value="T45798"/>
</dbReference>
<dbReference type="RefSeq" id="NP_191279.3">
    <property type="nucleotide sequence ID" value="NM_115580.5"/>
</dbReference>
<dbReference type="FunCoup" id="Q5XV99">
    <property type="interactions" value="3"/>
</dbReference>
<dbReference type="STRING" id="3702.Q5XV99"/>
<dbReference type="GlyGen" id="Q5XV99">
    <property type="glycosylation" value="4 sites"/>
</dbReference>
<dbReference type="iPTMnet" id="Q5XV99"/>
<dbReference type="PaxDb" id="3702-AT3G57200.1"/>
<dbReference type="ProteomicsDB" id="247374"/>
<dbReference type="EnsemblPlants" id="AT3G57200.1">
    <property type="protein sequence ID" value="AT3G57200.1"/>
    <property type="gene ID" value="AT3G57200"/>
</dbReference>
<dbReference type="GeneID" id="824887"/>
<dbReference type="Gramene" id="AT3G57200.1">
    <property type="protein sequence ID" value="AT3G57200.1"/>
    <property type="gene ID" value="AT3G57200"/>
</dbReference>
<dbReference type="KEGG" id="ath:AT3G57200"/>
<dbReference type="Araport" id="AT3G57200"/>
<dbReference type="TAIR" id="AT3G57200"/>
<dbReference type="eggNOG" id="ENOG502QPZC">
    <property type="taxonomic scope" value="Eukaryota"/>
</dbReference>
<dbReference type="HOGENOM" id="CLU_032860_0_0_1"/>
<dbReference type="InParanoid" id="Q5XV99"/>
<dbReference type="PhylomeDB" id="Q5XV99"/>
<dbReference type="PRO" id="PR:Q5XV99"/>
<dbReference type="Proteomes" id="UP000006548">
    <property type="component" value="Chromosome 3"/>
</dbReference>
<dbReference type="ExpressionAtlas" id="Q5XV99">
    <property type="expression patterns" value="baseline and differential"/>
</dbReference>
<dbReference type="GO" id="GO:0005737">
    <property type="term" value="C:cytoplasm"/>
    <property type="evidence" value="ECO:0007669"/>
    <property type="project" value="UniProtKB-SubCell"/>
</dbReference>
<dbReference type="GO" id="GO:0005576">
    <property type="term" value="C:extracellular region"/>
    <property type="evidence" value="ECO:0007669"/>
    <property type="project" value="UniProtKB-KW"/>
</dbReference>
<dbReference type="GO" id="GO:0009505">
    <property type="term" value="C:plant-type cell wall"/>
    <property type="evidence" value="ECO:0000250"/>
    <property type="project" value="UniProtKB"/>
</dbReference>
<dbReference type="GO" id="GO:0005886">
    <property type="term" value="C:plasma membrane"/>
    <property type="evidence" value="ECO:0007669"/>
    <property type="project" value="UniProtKB-SubCell"/>
</dbReference>
<dbReference type="GO" id="GO:0016757">
    <property type="term" value="F:glycosyltransferase activity"/>
    <property type="evidence" value="ECO:0007669"/>
    <property type="project" value="UniProtKB-KW"/>
</dbReference>
<dbReference type="GO" id="GO:0030154">
    <property type="term" value="P:cell differentiation"/>
    <property type="evidence" value="ECO:0007669"/>
    <property type="project" value="UniProtKB-KW"/>
</dbReference>
<dbReference type="GO" id="GO:0051301">
    <property type="term" value="P:cell division"/>
    <property type="evidence" value="ECO:0007669"/>
    <property type="project" value="UniProtKB-KW"/>
</dbReference>
<dbReference type="GO" id="GO:0071555">
    <property type="term" value="P:cell wall organization"/>
    <property type="evidence" value="ECO:0007669"/>
    <property type="project" value="UniProtKB-KW"/>
</dbReference>
<dbReference type="GO" id="GO:0030244">
    <property type="term" value="P:cellulose biosynthetic process"/>
    <property type="evidence" value="ECO:0007669"/>
    <property type="project" value="InterPro"/>
</dbReference>
<dbReference type="GO" id="GO:0009737">
    <property type="term" value="P:response to abscisic acid"/>
    <property type="evidence" value="ECO:0007669"/>
    <property type="project" value="InterPro"/>
</dbReference>
<dbReference type="InterPro" id="IPR044224">
    <property type="entry name" value="KOBITO1-like"/>
</dbReference>
<dbReference type="PANTHER" id="PTHR46701:SF6">
    <property type="entry name" value="GLYCOSYLTRANSFERASE FAMILY 92 PROTEIN"/>
    <property type="match status" value="1"/>
</dbReference>
<dbReference type="PANTHER" id="PTHR46701">
    <property type="entry name" value="GLYCOSYLTRANSFERASE-LIKE KOBITO 1"/>
    <property type="match status" value="1"/>
</dbReference>
<accession>Q5XV99</accession>
<accession>Q9M2M7</accession>
<reference key="1">
    <citation type="journal article" date="2000" name="Nature">
        <title>Sequence and analysis of chromosome 3 of the plant Arabidopsis thaliana.</title>
        <authorList>
            <person name="Salanoubat M."/>
            <person name="Lemcke K."/>
            <person name="Rieger M."/>
            <person name="Ansorge W."/>
            <person name="Unseld M."/>
            <person name="Fartmann B."/>
            <person name="Valle G."/>
            <person name="Bloecker H."/>
            <person name="Perez-Alonso M."/>
            <person name="Obermaier B."/>
            <person name="Delseny M."/>
            <person name="Boutry M."/>
            <person name="Grivell L.A."/>
            <person name="Mache R."/>
            <person name="Puigdomenech P."/>
            <person name="De Simone V."/>
            <person name="Choisne N."/>
            <person name="Artiguenave F."/>
            <person name="Robert C."/>
            <person name="Brottier P."/>
            <person name="Wincker P."/>
            <person name="Cattolico L."/>
            <person name="Weissenbach J."/>
            <person name="Saurin W."/>
            <person name="Quetier F."/>
            <person name="Schaefer M."/>
            <person name="Mueller-Auer S."/>
            <person name="Gabel C."/>
            <person name="Fuchs M."/>
            <person name="Benes V."/>
            <person name="Wurmbach E."/>
            <person name="Drzonek H."/>
            <person name="Erfle H."/>
            <person name="Jordan N."/>
            <person name="Bangert S."/>
            <person name="Wiedelmann R."/>
            <person name="Kranz H."/>
            <person name="Voss H."/>
            <person name="Holland R."/>
            <person name="Brandt P."/>
            <person name="Nyakatura G."/>
            <person name="Vezzi A."/>
            <person name="D'Angelo M."/>
            <person name="Pallavicini A."/>
            <person name="Toppo S."/>
            <person name="Simionati B."/>
            <person name="Conrad A."/>
            <person name="Hornischer K."/>
            <person name="Kauer G."/>
            <person name="Loehnert T.-H."/>
            <person name="Nordsiek G."/>
            <person name="Reichelt J."/>
            <person name="Scharfe M."/>
            <person name="Schoen O."/>
            <person name="Bargues M."/>
            <person name="Terol J."/>
            <person name="Climent J."/>
            <person name="Navarro P."/>
            <person name="Collado C."/>
            <person name="Perez-Perez A."/>
            <person name="Ottenwaelder B."/>
            <person name="Duchemin D."/>
            <person name="Cooke R."/>
            <person name="Laudie M."/>
            <person name="Berger-Llauro C."/>
            <person name="Purnelle B."/>
            <person name="Masuy D."/>
            <person name="de Haan M."/>
            <person name="Maarse A.C."/>
            <person name="Alcaraz J.-P."/>
            <person name="Cottet A."/>
            <person name="Casacuberta E."/>
            <person name="Monfort A."/>
            <person name="Argiriou A."/>
            <person name="Flores M."/>
            <person name="Liguori R."/>
            <person name="Vitale D."/>
            <person name="Mannhaupt G."/>
            <person name="Haase D."/>
            <person name="Schoof H."/>
            <person name="Rudd S."/>
            <person name="Zaccaria P."/>
            <person name="Mewes H.-W."/>
            <person name="Mayer K.F.X."/>
            <person name="Kaul S."/>
            <person name="Town C.D."/>
            <person name="Koo H.L."/>
            <person name="Tallon L.J."/>
            <person name="Jenkins J."/>
            <person name="Rooney T."/>
            <person name="Rizzo M."/>
            <person name="Walts A."/>
            <person name="Utterback T."/>
            <person name="Fujii C.Y."/>
            <person name="Shea T.P."/>
            <person name="Creasy T.H."/>
            <person name="Haas B."/>
            <person name="Maiti R."/>
            <person name="Wu D."/>
            <person name="Peterson J."/>
            <person name="Van Aken S."/>
            <person name="Pai G."/>
            <person name="Militscher J."/>
            <person name="Sellers P."/>
            <person name="Gill J.E."/>
            <person name="Feldblyum T.V."/>
            <person name="Preuss D."/>
            <person name="Lin X."/>
            <person name="Nierman W.C."/>
            <person name="Salzberg S.L."/>
            <person name="White O."/>
            <person name="Venter J.C."/>
            <person name="Fraser C.M."/>
            <person name="Kaneko T."/>
            <person name="Nakamura Y."/>
            <person name="Sato S."/>
            <person name="Kato T."/>
            <person name="Asamizu E."/>
            <person name="Sasamoto S."/>
            <person name="Kimura T."/>
            <person name="Idesawa K."/>
            <person name="Kawashima K."/>
            <person name="Kishida Y."/>
            <person name="Kiyokawa C."/>
            <person name="Kohara M."/>
            <person name="Matsumoto M."/>
            <person name="Matsuno A."/>
            <person name="Muraki A."/>
            <person name="Nakayama S."/>
            <person name="Nakazaki N."/>
            <person name="Shinpo S."/>
            <person name="Takeuchi C."/>
            <person name="Wada T."/>
            <person name="Watanabe A."/>
            <person name="Yamada M."/>
            <person name="Yasuda M."/>
            <person name="Tabata S."/>
        </authorList>
    </citation>
    <scope>NUCLEOTIDE SEQUENCE [LARGE SCALE GENOMIC DNA]</scope>
    <source>
        <strain>cv. Columbia</strain>
    </source>
</reference>
<reference key="2">
    <citation type="journal article" date="2017" name="Plant J.">
        <title>Araport11: a complete reannotation of the Arabidopsis thaliana reference genome.</title>
        <authorList>
            <person name="Cheng C.Y."/>
            <person name="Krishnakumar V."/>
            <person name="Chan A.P."/>
            <person name="Thibaud-Nissen F."/>
            <person name="Schobel S."/>
            <person name="Town C.D."/>
        </authorList>
    </citation>
    <scope>GENOME REANNOTATION</scope>
    <source>
        <strain>cv. Columbia</strain>
    </source>
</reference>
<reference key="3">
    <citation type="journal article" date="2005" name="Plant Physiol.">
        <title>Analysis of the cDNAs of hypothetical genes on Arabidopsis chromosome 2 reveals numerous transcript variants.</title>
        <authorList>
            <person name="Xiao Y.-L."/>
            <person name="Smith S.R."/>
            <person name="Ishmael N."/>
            <person name="Redman J.C."/>
            <person name="Kumar N."/>
            <person name="Monaghan E.L."/>
            <person name="Ayele M."/>
            <person name="Haas B.J."/>
            <person name="Wu H.C."/>
            <person name="Town C.D."/>
        </authorList>
    </citation>
    <scope>NUCLEOTIDE SEQUENCE [LARGE SCALE MRNA]</scope>
    <source>
        <strain>cv. Columbia</strain>
    </source>
</reference>
<reference key="4">
    <citation type="submission" date="2005-03" db="EMBL/GenBank/DDBJ databases">
        <authorList>
            <person name="Underwood B.A."/>
            <person name="Xiao Y.-L."/>
            <person name="Moskal W.A. Jr."/>
            <person name="Monaghan E.L."/>
            <person name="Wang W."/>
            <person name="Redman J.C."/>
            <person name="Wu H.C."/>
            <person name="Utterback T."/>
            <person name="Town C.D."/>
        </authorList>
    </citation>
    <scope>NUCLEOTIDE SEQUENCE [LARGE SCALE MRNA]</scope>
    <source>
        <strain>cv. Columbia</strain>
    </source>
</reference>
<reference key="5">
    <citation type="journal article" date="2003" name="Plant Mol. Biol.">
        <title>The elongation defective1 mutant of Arabidopsis is impaired in the gene encoding a serine-rich secreted protein.</title>
        <authorList>
            <person name="Lertpiriyapong K."/>
            <person name="Sung Z.R."/>
        </authorList>
    </citation>
    <scope>GENE FAMILY</scope>
    <source>
        <strain>cv. Columbia</strain>
    </source>
</reference>
<reference key="6">
    <citation type="journal article" date="2004" name="Plant Cell">
        <title>The Arabidopsis thaliana ABSCISIC ACID-INSENSITIVE8 encodes a novel protein mediating abscisic acid and sugar responses essential for growth.</title>
        <authorList>
            <person name="Brocard-Gifford I."/>
            <person name="Lynch T.J."/>
            <person name="Garcia M.E."/>
            <person name="Malhotra B."/>
            <person name="Finkelstein R.R."/>
        </authorList>
    </citation>
    <scope>GENE FAMILY</scope>
</reference>
<proteinExistence type="evidence at transcript level"/>
<sequence>MAGLYSSSSSSKPTLSSSPSSSSSSRLFLLVTLLPLSLACFAFVLQWRGGLDDPVTHWSIDHHEFPGMVTTQEKRSLRRSVSDSGCVDLLGQSRSPSFPYFRNWKFDYHSDLKPRICITTSTSAGLEQTLPWIYFHKVIGVSTFYLFVEGKAASPNVSRVLETIPGVKVIYRTKELEEKQAKSRIWNETWLSSFFYKPCNYELFVKQSLNMEMAITMAQDAGMEWIIHLDTDELIHPSGTHEYSLRKLLGNISADVDVVIFPNYESSVERDDIREPFSEVSMFKKNFDHLLRDVYFGNYKDATRGNPNYFLTYGNGKAAARVQDHLRPNGAHRWHNYRKSPNEVKLEEAAVLHYTYPRFSDLTSRRDRCGCKPTKVDVKRCFMLEFDRAAFIIASTASSEEMLQWYREHVVWTDEKLKLKLLRKGILTRIYAPMVIIQELREAGVFSSVVIAAHKSPSKNSSTADSTSGITRESSQETGKRRVLEFHLDVDGESQASAVPPQSPPGLEATQMEL</sequence>
<name>GLYT7_ARATH</name>
<organism evidence="7">
    <name type="scientific">Arabidopsis thaliana</name>
    <name type="common">Mouse-ear cress</name>
    <dbReference type="NCBI Taxonomy" id="3702"/>
    <lineage>
        <taxon>Eukaryota</taxon>
        <taxon>Viridiplantae</taxon>
        <taxon>Streptophyta</taxon>
        <taxon>Embryophyta</taxon>
        <taxon>Tracheophyta</taxon>
        <taxon>Spermatophyta</taxon>
        <taxon>Magnoliopsida</taxon>
        <taxon>eudicotyledons</taxon>
        <taxon>Gunneridae</taxon>
        <taxon>Pentapetalae</taxon>
        <taxon>rosids</taxon>
        <taxon>malvids</taxon>
        <taxon>Brassicales</taxon>
        <taxon>Brassicaceae</taxon>
        <taxon>Camelineae</taxon>
        <taxon>Arabidopsis</taxon>
    </lineage>
</organism>
<feature type="signal peptide" evidence="2">
    <location>
        <begin position="1"/>
        <end position="39"/>
    </location>
</feature>
<feature type="chain" id="PRO_0000430756" description="Glycosyltransferase-like At3g57200" evidence="2">
    <location>
        <begin position="40"/>
        <end position="514"/>
    </location>
</feature>
<feature type="region of interest" description="Disordered" evidence="4">
    <location>
        <begin position="1"/>
        <end position="23"/>
    </location>
</feature>
<feature type="region of interest" description="Disordered" evidence="4">
    <location>
        <begin position="457"/>
        <end position="514"/>
    </location>
</feature>
<feature type="compositionally biased region" description="Polar residues" evidence="4">
    <location>
        <begin position="458"/>
        <end position="473"/>
    </location>
</feature>
<feature type="compositionally biased region" description="Basic and acidic residues" evidence="4">
    <location>
        <begin position="474"/>
        <end position="490"/>
    </location>
</feature>
<feature type="glycosylation site" description="N-linked (GlcNAc...) asparagine" evidence="3">
    <location>
        <position position="156"/>
    </location>
</feature>
<feature type="glycosylation site" description="N-linked (GlcNAc...) asparagine" evidence="3">
    <location>
        <position position="187"/>
    </location>
</feature>
<feature type="glycosylation site" description="N-linked (GlcNAc...) asparagine" evidence="3">
    <location>
        <position position="251"/>
    </location>
</feature>
<feature type="glycosylation site" description="N-linked (GlcNAc...) asparagine" evidence="3">
    <location>
        <position position="460"/>
    </location>
</feature>
<comment type="function">
    <text evidence="1">Involved in the coordination between cell elongation and cellulose synthesis by promoting the expression of genes involved in cell elongation and cellulose synthesis. Acts as a regulator of plasmodesmatal permeability. Maybe a glycosyltransferase.</text>
</comment>
<comment type="subcellular location">
    <subcellularLocation>
        <location evidence="1">Secreted</location>
        <location evidence="1">Cell wall</location>
    </subcellularLocation>
    <subcellularLocation>
        <location evidence="1">Cytoplasm</location>
    </subcellularLocation>
    <subcellularLocation>
        <location evidence="1">Cell membrane</location>
    </subcellularLocation>
</comment>
<comment type="similarity">
    <text evidence="5">Belongs to the glycosyltransferase 25 family.</text>
</comment>
<comment type="sequence caution">
    <conflict type="erroneous gene model prediction">
        <sequence resource="EMBL-CDS" id="CAB68126"/>
    </conflict>
</comment>
<gene>
    <name evidence="6" type="ordered locus">At3g57200</name>
    <name evidence="8" type="ORF">F28O9.50</name>
</gene>